<protein>
    <recommendedName>
        <fullName evidence="7">Fructose-2,6-bisphosphatase TIGAR</fullName>
        <ecNumber evidence="2">3.1.3.46</ecNumber>
    </recommendedName>
    <alternativeName>
        <fullName evidence="2">TP53-induced glycolysis and apoptosis regulator</fullName>
    </alternativeName>
    <alternativeName>
        <fullName evidence="8">TP53-induced glycolysis regulatory phosphatase</fullName>
    </alternativeName>
</protein>
<accession>Q8BZA9</accession>
<comment type="function">
    <text evidence="2 4 5 6">Fructose-bisphosphatase hydrolyzing fructose-2,6-bisphosphate as well as fructose-1,6-bisphosphate (By similarity). Acts as a negative regulator of glycolysis by lowering intracellular levels of fructose-2,6-bisphosphate in a p53/TP53-dependent manner, resulting in the pentose phosphate pathway (PPP) activation and NADPH production (PubMed:23726973). Contributes to the generation of reduced glutathione to cause a decrease in intracellular reactive oxygen species (ROS) content, correlating with its ability to protect cells from oxidative or metabolic stress-induced cell death (PubMed:23726973). Plays a role in promoting protection against cell death during hypoxia by decreasing mitochondria ROS levels in a HK2-dependent manner through a mechanism that is independent of its fructose-bisphosphatase activity (By similarity). In response to cardiac damage stress, mediates p53-induced inhibition of myocyte mitophagy through ROS levels reduction and the subsequent inactivation of BNIP3 (PubMed:22044588). Reduced mitophagy results in an enhanced apoptotic myocyte cell death, and exacerbates cardiac damage (PubMed:22044588). Plays a role in adult intestinal regeneration; contributes to the growth, proliferation and survival of intestinal crypts following tissue ablation (PubMed:23726973). Plays a neuroprotective role against ischemic brain damage by enhancing PPP flux and preserving mitochondria functions (PubMed:24872551). Protects glioma cells from hypoxia- and ROS-induced cell death by inhibiting glycolysis and activating mitochondrial energy metabolism and oxygen consumption in a TKTL1-dependent and p53/TP53-independent manner. Plays a role in cancer cell survival by promoting DNA repair through activating PPP flux in a CDK5-ATM-dependent signaling pathway during hypoxia and/or genome stress-induced DNA damage responses (By similarity). Involved in intestinal tumor progression (PubMed:23726973).</text>
</comment>
<comment type="catalytic activity">
    <reaction evidence="2">
        <text>beta-D-fructose 2,6-bisphosphate + H2O = beta-D-fructose 6-phosphate + phosphate</text>
        <dbReference type="Rhea" id="RHEA:17289"/>
        <dbReference type="ChEBI" id="CHEBI:15377"/>
        <dbReference type="ChEBI" id="CHEBI:43474"/>
        <dbReference type="ChEBI" id="CHEBI:57634"/>
        <dbReference type="ChEBI" id="CHEBI:58579"/>
        <dbReference type="EC" id="3.1.3.46"/>
    </reaction>
</comment>
<comment type="subunit">
    <text evidence="2">Interacts with HK2; the interaction increases hexokinase HK2 activity in a hypoxia- and HIF1A-dependent manner, resulting in the regulation of mitochondrial membrane potential, thus increasing NADPH production and decreasing intracellular ROS levels.</text>
</comment>
<comment type="subcellular location">
    <subcellularLocation>
        <location evidence="6">Cytoplasm</location>
    </subcellularLocation>
    <subcellularLocation>
        <location evidence="2">Nucleus</location>
    </subcellularLocation>
    <subcellularLocation>
        <location evidence="6">Mitochondrion</location>
    </subcellularLocation>
    <text evidence="2 6">Translocated to the mitochondria during hypoxia in a HIF1A-dependent manner. Colocalizes with HK2 in the mitochondria during hypoxia. Translocated to the nucleus during hypoxia and/or genome stress-induced DNA damage responses in cancer cells (By similarity). Translocation to the mitochondria is enhanced in ischemic cortex after reperfusion and/or during oxygen and glucose deprivation (OGD)/reoxygenation insult in primary neurons (PubMed:24872551).</text>
</comment>
<comment type="tissue specificity">
    <text evidence="5 6">Expressed in olfactory bulb, cerebellum, and cortex (PubMed:24872551). Expressed in neurons and astrocytes (PubMed:24872551) (at protein level). Expressed in intestinal crypt (PubMed:23726973).</text>
</comment>
<comment type="induction">
    <text evidence="3 4 5 6">Up-regulated by hypoxia in cardiac myocytes in a p53/TP53-dependent manner (PubMed:20935145). Up-regulated in ischemic cortex after reperfusion in a p53/TP5-independent manner (PubMed:24872551). Up-regulated in primary neurons by oxygen and glucose deprivation (OGD)/reoxygenation insult in a p53/TP5-independent manner (at protein level) (PubMed:24872551). Up-regulated in ischemic myocardium in a p53/TP5-dependent manner (PubMed:22044588). Up-regulated in small intestine after gamma irradiation damage (PubMed:23726973).</text>
</comment>
<comment type="disruption phenotype">
    <text evidence="4 5">Mice are viable and fertile and show no obvious developmental defects (PubMed:23726973). Following intestine ablation by gamma irradiation, adult mice display a reduction in the size and number of proliferating intestinal crypts and an increase in cell death (PubMed:23726973). Mice display reduced intestinal tumor progression compared to wild-type mice (PubMed:23726973). In response to ischemic myocardium injury, display an increase in the ability to stimulate myocyte mitophagy in ischemic border zones through a ROS-induced and BNIP3 activation dependent manner leading to a reduction of defective mitochondria and myocyte cell death, and hence a better recovery of cardiac function (PubMed:22044588).</text>
</comment>
<comment type="similarity">
    <text evidence="7">Belongs to the phosphoglycerate mutase family.</text>
</comment>
<comment type="caution">
    <text evidence="7">Not expected to have any kinase activity.</text>
</comment>
<reference key="1">
    <citation type="journal article" date="2005" name="Science">
        <title>The transcriptional landscape of the mammalian genome.</title>
        <authorList>
            <person name="Carninci P."/>
            <person name="Kasukawa T."/>
            <person name="Katayama S."/>
            <person name="Gough J."/>
            <person name="Frith M.C."/>
            <person name="Maeda N."/>
            <person name="Oyama R."/>
            <person name="Ravasi T."/>
            <person name="Lenhard B."/>
            <person name="Wells C."/>
            <person name="Kodzius R."/>
            <person name="Shimokawa K."/>
            <person name="Bajic V.B."/>
            <person name="Brenner S.E."/>
            <person name="Batalov S."/>
            <person name="Forrest A.R."/>
            <person name="Zavolan M."/>
            <person name="Davis M.J."/>
            <person name="Wilming L.G."/>
            <person name="Aidinis V."/>
            <person name="Allen J.E."/>
            <person name="Ambesi-Impiombato A."/>
            <person name="Apweiler R."/>
            <person name="Aturaliya R.N."/>
            <person name="Bailey T.L."/>
            <person name="Bansal M."/>
            <person name="Baxter L."/>
            <person name="Beisel K.W."/>
            <person name="Bersano T."/>
            <person name="Bono H."/>
            <person name="Chalk A.M."/>
            <person name="Chiu K.P."/>
            <person name="Choudhary V."/>
            <person name="Christoffels A."/>
            <person name="Clutterbuck D.R."/>
            <person name="Crowe M.L."/>
            <person name="Dalla E."/>
            <person name="Dalrymple B.P."/>
            <person name="de Bono B."/>
            <person name="Della Gatta G."/>
            <person name="di Bernardo D."/>
            <person name="Down T."/>
            <person name="Engstrom P."/>
            <person name="Fagiolini M."/>
            <person name="Faulkner G."/>
            <person name="Fletcher C.F."/>
            <person name="Fukushima T."/>
            <person name="Furuno M."/>
            <person name="Futaki S."/>
            <person name="Gariboldi M."/>
            <person name="Georgii-Hemming P."/>
            <person name="Gingeras T.R."/>
            <person name="Gojobori T."/>
            <person name="Green R.E."/>
            <person name="Gustincich S."/>
            <person name="Harbers M."/>
            <person name="Hayashi Y."/>
            <person name="Hensch T.K."/>
            <person name="Hirokawa N."/>
            <person name="Hill D."/>
            <person name="Huminiecki L."/>
            <person name="Iacono M."/>
            <person name="Ikeo K."/>
            <person name="Iwama A."/>
            <person name="Ishikawa T."/>
            <person name="Jakt M."/>
            <person name="Kanapin A."/>
            <person name="Katoh M."/>
            <person name="Kawasawa Y."/>
            <person name="Kelso J."/>
            <person name="Kitamura H."/>
            <person name="Kitano H."/>
            <person name="Kollias G."/>
            <person name="Krishnan S.P."/>
            <person name="Kruger A."/>
            <person name="Kummerfeld S.K."/>
            <person name="Kurochkin I.V."/>
            <person name="Lareau L.F."/>
            <person name="Lazarevic D."/>
            <person name="Lipovich L."/>
            <person name="Liu J."/>
            <person name="Liuni S."/>
            <person name="McWilliam S."/>
            <person name="Madan Babu M."/>
            <person name="Madera M."/>
            <person name="Marchionni L."/>
            <person name="Matsuda H."/>
            <person name="Matsuzawa S."/>
            <person name="Miki H."/>
            <person name="Mignone F."/>
            <person name="Miyake S."/>
            <person name="Morris K."/>
            <person name="Mottagui-Tabar S."/>
            <person name="Mulder N."/>
            <person name="Nakano N."/>
            <person name="Nakauchi H."/>
            <person name="Ng P."/>
            <person name="Nilsson R."/>
            <person name="Nishiguchi S."/>
            <person name="Nishikawa S."/>
            <person name="Nori F."/>
            <person name="Ohara O."/>
            <person name="Okazaki Y."/>
            <person name="Orlando V."/>
            <person name="Pang K.C."/>
            <person name="Pavan W.J."/>
            <person name="Pavesi G."/>
            <person name="Pesole G."/>
            <person name="Petrovsky N."/>
            <person name="Piazza S."/>
            <person name="Reed J."/>
            <person name="Reid J.F."/>
            <person name="Ring B.Z."/>
            <person name="Ringwald M."/>
            <person name="Rost B."/>
            <person name="Ruan Y."/>
            <person name="Salzberg S.L."/>
            <person name="Sandelin A."/>
            <person name="Schneider C."/>
            <person name="Schoenbach C."/>
            <person name="Sekiguchi K."/>
            <person name="Semple C.A."/>
            <person name="Seno S."/>
            <person name="Sessa L."/>
            <person name="Sheng Y."/>
            <person name="Shibata Y."/>
            <person name="Shimada H."/>
            <person name="Shimada K."/>
            <person name="Silva D."/>
            <person name="Sinclair B."/>
            <person name="Sperling S."/>
            <person name="Stupka E."/>
            <person name="Sugiura K."/>
            <person name="Sultana R."/>
            <person name="Takenaka Y."/>
            <person name="Taki K."/>
            <person name="Tammoja K."/>
            <person name="Tan S.L."/>
            <person name="Tang S."/>
            <person name="Taylor M.S."/>
            <person name="Tegner J."/>
            <person name="Teichmann S.A."/>
            <person name="Ueda H.R."/>
            <person name="van Nimwegen E."/>
            <person name="Verardo R."/>
            <person name="Wei C.L."/>
            <person name="Yagi K."/>
            <person name="Yamanishi H."/>
            <person name="Zabarovsky E."/>
            <person name="Zhu S."/>
            <person name="Zimmer A."/>
            <person name="Hide W."/>
            <person name="Bult C."/>
            <person name="Grimmond S.M."/>
            <person name="Teasdale R.D."/>
            <person name="Liu E.T."/>
            <person name="Brusic V."/>
            <person name="Quackenbush J."/>
            <person name="Wahlestedt C."/>
            <person name="Mattick J.S."/>
            <person name="Hume D.A."/>
            <person name="Kai C."/>
            <person name="Sasaki D."/>
            <person name="Tomaru Y."/>
            <person name="Fukuda S."/>
            <person name="Kanamori-Katayama M."/>
            <person name="Suzuki M."/>
            <person name="Aoki J."/>
            <person name="Arakawa T."/>
            <person name="Iida J."/>
            <person name="Imamura K."/>
            <person name="Itoh M."/>
            <person name="Kato T."/>
            <person name="Kawaji H."/>
            <person name="Kawagashira N."/>
            <person name="Kawashima T."/>
            <person name="Kojima M."/>
            <person name="Kondo S."/>
            <person name="Konno H."/>
            <person name="Nakano K."/>
            <person name="Ninomiya N."/>
            <person name="Nishio T."/>
            <person name="Okada M."/>
            <person name="Plessy C."/>
            <person name="Shibata K."/>
            <person name="Shiraki T."/>
            <person name="Suzuki S."/>
            <person name="Tagami M."/>
            <person name="Waki K."/>
            <person name="Watahiki A."/>
            <person name="Okamura-Oho Y."/>
            <person name="Suzuki H."/>
            <person name="Kawai J."/>
            <person name="Hayashizaki Y."/>
        </authorList>
    </citation>
    <scope>NUCLEOTIDE SEQUENCE [LARGE SCALE MRNA]</scope>
    <source>
        <strain>C57BL/6J</strain>
        <tissue>Cerebellum</tissue>
        <tissue>Egg</tissue>
        <tissue>Placenta</tissue>
    </source>
</reference>
<reference key="2">
    <citation type="journal article" date="2009" name="Mol. Cell. Proteomics">
        <title>Large scale localization of protein phosphorylation by use of electron capture dissociation mass spectrometry.</title>
        <authorList>
            <person name="Sweet S.M."/>
            <person name="Bailey C.M."/>
            <person name="Cunningham D.L."/>
            <person name="Heath J.K."/>
            <person name="Cooper H.J."/>
        </authorList>
    </citation>
    <scope>IDENTIFICATION BY MASS SPECTROMETRY [LARGE SCALE ANALYSIS]</scope>
    <source>
        <tissue>Embryonic fibroblast</tissue>
    </source>
</reference>
<reference key="3">
    <citation type="journal article" date="2010" name="Am. J. Physiol.">
        <title>p53 and TIGAR regulate cardiac myocyte energy homeostasis under hypoxic stress.</title>
        <authorList>
            <person name="Kimata M."/>
            <person name="Matoba S."/>
            <person name="Iwai-Kanai E."/>
            <person name="Nakamura H."/>
            <person name="Hoshino A."/>
            <person name="Nakaoka M."/>
            <person name="Katamura M."/>
            <person name="Okawa Y."/>
            <person name="Mita Y."/>
            <person name="Okigaki M."/>
            <person name="Ikeda K."/>
            <person name="Tatsumi T."/>
            <person name="Matsubara H."/>
        </authorList>
    </citation>
    <scope>INDUCTION</scope>
</reference>
<reference key="4">
    <citation type="journal article" date="2010" name="Cell">
        <title>A tissue-specific atlas of mouse protein phosphorylation and expression.</title>
        <authorList>
            <person name="Huttlin E.L."/>
            <person name="Jedrychowski M.P."/>
            <person name="Elias J.E."/>
            <person name="Goswami T."/>
            <person name="Rad R."/>
            <person name="Beausoleil S.A."/>
            <person name="Villen J."/>
            <person name="Haas W."/>
            <person name="Sowa M.E."/>
            <person name="Gygi S.P."/>
        </authorList>
    </citation>
    <scope>IDENTIFICATION BY MASS SPECTROMETRY [LARGE SCALE ANALYSIS]</scope>
    <source>
        <tissue>Brain</tissue>
        <tissue>Brown adipose tissue</tissue>
        <tissue>Heart</tissue>
        <tissue>Kidney</tissue>
        <tissue>Liver</tissue>
        <tissue>Lung</tissue>
        <tissue>Pancreas</tissue>
        <tissue>Spleen</tissue>
        <tissue>Testis</tissue>
    </source>
</reference>
<reference key="5">
    <citation type="journal article" date="2012" name="J. Mol. Cell. Cardiol.">
        <title>p53-TIGAR axis attenuates mitophagy to exacerbate cardiac damage after ischemia.</title>
        <authorList>
            <person name="Hoshino A."/>
            <person name="Matoba S."/>
            <person name="Iwai-Kanai E."/>
            <person name="Nakamura H."/>
            <person name="Kimata M."/>
            <person name="Nakaoka M."/>
            <person name="Katamura M."/>
            <person name="Okawa Y."/>
            <person name="Ariyoshi M."/>
            <person name="Mita Y."/>
            <person name="Ikeda K."/>
            <person name="Ueyama T."/>
            <person name="Okigaki M."/>
            <person name="Matsubara H."/>
        </authorList>
    </citation>
    <scope>FUNCTION</scope>
    <scope>DISRUPTION PHENOTYPE</scope>
    <scope>INDUCTION</scope>
</reference>
<reference key="6">
    <citation type="journal article" date="2013" name="Dev. Cell">
        <title>TIGAR is required for efficient intestinal regeneration and tumorigenesis.</title>
        <authorList>
            <person name="Cheung E.C."/>
            <person name="Athineos D."/>
            <person name="Lee P."/>
            <person name="Ridgway R.A."/>
            <person name="Lambie W."/>
            <person name="Nixon C."/>
            <person name="Strathdee D."/>
            <person name="Blyth K."/>
            <person name="Sansom O.J."/>
            <person name="Vousden K.H."/>
        </authorList>
    </citation>
    <scope>FUNCTION</scope>
    <scope>DISRUPTION PHENOTYPE</scope>
    <scope>TISSUE SPECIFICITY</scope>
    <scope>INDUCTION</scope>
</reference>
<reference key="7">
    <citation type="journal article" date="2014" name="J. Neurosci.">
        <title>A TIGAR-regulated metabolic pathway is critical for protection of brain ischemia.</title>
        <authorList>
            <person name="Li M."/>
            <person name="Sun M."/>
            <person name="Cao L."/>
            <person name="Gu J.H."/>
            <person name="Ge J."/>
            <person name="Chen J."/>
            <person name="Han R."/>
            <person name="Qin Y.Y."/>
            <person name="Zhou Z.P."/>
            <person name="Ding Y."/>
            <person name="Qin Z.H."/>
        </authorList>
    </citation>
    <scope>FUNCTION</scope>
    <scope>INDUCTION</scope>
    <scope>SUBCELLULAR LOCATION</scope>
    <scope>TISSUE SPECIFICITY</scope>
</reference>
<dbReference type="EC" id="3.1.3.46" evidence="2"/>
<dbReference type="EMBL" id="AK036082">
    <property type="protein sequence ID" value="BAC29298.1"/>
    <property type="molecule type" value="mRNA"/>
</dbReference>
<dbReference type="EMBL" id="AK145896">
    <property type="protein sequence ID" value="BAE26732.1"/>
    <property type="molecule type" value="mRNA"/>
</dbReference>
<dbReference type="EMBL" id="AK163290">
    <property type="protein sequence ID" value="BAE37278.1"/>
    <property type="molecule type" value="mRNA"/>
</dbReference>
<dbReference type="CCDS" id="CCDS20563.1"/>
<dbReference type="RefSeq" id="NP_795977.1">
    <property type="nucleotide sequence ID" value="NM_177003.5"/>
</dbReference>
<dbReference type="SMR" id="Q8BZA9"/>
<dbReference type="FunCoup" id="Q8BZA9">
    <property type="interactions" value="728"/>
</dbReference>
<dbReference type="STRING" id="10090.ENSMUSP00000048643"/>
<dbReference type="iPTMnet" id="Q8BZA9"/>
<dbReference type="PhosphoSitePlus" id="Q8BZA9"/>
<dbReference type="jPOST" id="Q8BZA9"/>
<dbReference type="PaxDb" id="10090-ENSMUSP00000048643"/>
<dbReference type="ProteomicsDB" id="262782"/>
<dbReference type="Pumba" id="Q8BZA9"/>
<dbReference type="Antibodypedia" id="22261">
    <property type="antibodies" value="380 antibodies from 37 providers"/>
</dbReference>
<dbReference type="DNASU" id="319801"/>
<dbReference type="Ensembl" id="ENSMUST00000039913.9">
    <property type="protein sequence ID" value="ENSMUSP00000048643.9"/>
    <property type="gene ID" value="ENSMUSG00000038028.10"/>
</dbReference>
<dbReference type="GeneID" id="319801"/>
<dbReference type="KEGG" id="mmu:319801"/>
<dbReference type="UCSC" id="uc009dvq.2">
    <property type="organism name" value="mouse"/>
</dbReference>
<dbReference type="AGR" id="MGI:2442752"/>
<dbReference type="CTD" id="57103"/>
<dbReference type="MGI" id="MGI:2442752">
    <property type="gene designation" value="Tigar"/>
</dbReference>
<dbReference type="VEuPathDB" id="HostDB:ENSMUSG00000038028"/>
<dbReference type="eggNOG" id="KOG0235">
    <property type="taxonomic scope" value="Eukaryota"/>
</dbReference>
<dbReference type="GeneTree" id="ENSGT00390000013224"/>
<dbReference type="HOGENOM" id="CLU_033323_16_0_1"/>
<dbReference type="InParanoid" id="Q8BZA9"/>
<dbReference type="OMA" id="PTIQCVC"/>
<dbReference type="OrthoDB" id="354304at2759"/>
<dbReference type="PhylomeDB" id="Q8BZA9"/>
<dbReference type="TreeFam" id="TF329053"/>
<dbReference type="BRENDA" id="3.1.3.46">
    <property type="organism ID" value="3474"/>
</dbReference>
<dbReference type="Reactome" id="R-MMU-5628897">
    <property type="pathway name" value="TP53 Regulates Metabolic Genes"/>
</dbReference>
<dbReference type="BioGRID-ORCS" id="319801">
    <property type="hits" value="4 hits in 114 CRISPR screens"/>
</dbReference>
<dbReference type="PRO" id="PR:Q8BZA9"/>
<dbReference type="Proteomes" id="UP000000589">
    <property type="component" value="Chromosome 6"/>
</dbReference>
<dbReference type="RNAct" id="Q8BZA9">
    <property type="molecule type" value="protein"/>
</dbReference>
<dbReference type="Bgee" id="ENSMUSG00000038028">
    <property type="expression patterns" value="Expressed in knee joint and 214 other cell types or tissues"/>
</dbReference>
<dbReference type="ExpressionAtlas" id="Q8BZA9">
    <property type="expression patterns" value="baseline and differential"/>
</dbReference>
<dbReference type="GO" id="GO:0005737">
    <property type="term" value="C:cytoplasm"/>
    <property type="evidence" value="ECO:0000314"/>
    <property type="project" value="UniProtKB"/>
</dbReference>
<dbReference type="GO" id="GO:0005829">
    <property type="term" value="C:cytosol"/>
    <property type="evidence" value="ECO:0007669"/>
    <property type="project" value="Ensembl"/>
</dbReference>
<dbReference type="GO" id="GO:0005741">
    <property type="term" value="C:mitochondrial outer membrane"/>
    <property type="evidence" value="ECO:0000250"/>
    <property type="project" value="UniProtKB"/>
</dbReference>
<dbReference type="GO" id="GO:0005739">
    <property type="term" value="C:mitochondrion"/>
    <property type="evidence" value="ECO:0000314"/>
    <property type="project" value="UniProtKB"/>
</dbReference>
<dbReference type="GO" id="GO:0005634">
    <property type="term" value="C:nucleus"/>
    <property type="evidence" value="ECO:0000250"/>
    <property type="project" value="UniProtKB"/>
</dbReference>
<dbReference type="GO" id="GO:0004331">
    <property type="term" value="F:fructose-2,6-bisphosphate 2-phosphatase activity"/>
    <property type="evidence" value="ECO:0000315"/>
    <property type="project" value="MGI"/>
</dbReference>
<dbReference type="GO" id="GO:0010659">
    <property type="term" value="P:cardiac muscle cell apoptotic process"/>
    <property type="evidence" value="ECO:0000315"/>
    <property type="project" value="MGI"/>
</dbReference>
<dbReference type="GO" id="GO:0071279">
    <property type="term" value="P:cellular response to cobalt ion"/>
    <property type="evidence" value="ECO:0007669"/>
    <property type="project" value="Ensembl"/>
</dbReference>
<dbReference type="GO" id="GO:0071456">
    <property type="term" value="P:cellular response to hypoxia"/>
    <property type="evidence" value="ECO:0000250"/>
    <property type="project" value="UniProtKB"/>
</dbReference>
<dbReference type="GO" id="GO:0006974">
    <property type="term" value="P:DNA damage response"/>
    <property type="evidence" value="ECO:0000250"/>
    <property type="project" value="UniProtKB"/>
</dbReference>
<dbReference type="GO" id="GO:0006003">
    <property type="term" value="P:fructose 2,6-bisphosphate metabolic process"/>
    <property type="evidence" value="ECO:0000315"/>
    <property type="project" value="MGI"/>
</dbReference>
<dbReference type="GO" id="GO:0019661">
    <property type="term" value="P:glucose catabolic process to lactate via pyruvate"/>
    <property type="evidence" value="ECO:0000315"/>
    <property type="project" value="MGI"/>
</dbReference>
<dbReference type="GO" id="GO:0006096">
    <property type="term" value="P:glycolytic process"/>
    <property type="evidence" value="ECO:0000314"/>
    <property type="project" value="MGI"/>
</dbReference>
<dbReference type="GO" id="GO:0060576">
    <property type="term" value="P:intestinal epithelial cell development"/>
    <property type="evidence" value="ECO:0000315"/>
    <property type="project" value="MGI"/>
</dbReference>
<dbReference type="GO" id="GO:0000423">
    <property type="term" value="P:mitophagy"/>
    <property type="evidence" value="ECO:0000315"/>
    <property type="project" value="MGI"/>
</dbReference>
<dbReference type="GO" id="GO:1904024">
    <property type="term" value="P:negative regulation of glucose catabolic process to lactate via pyruvate"/>
    <property type="evidence" value="ECO:0000315"/>
    <property type="project" value="MGI"/>
</dbReference>
<dbReference type="GO" id="GO:0045820">
    <property type="term" value="P:negative regulation of glycolytic process"/>
    <property type="evidence" value="ECO:0000314"/>
    <property type="project" value="MGI"/>
</dbReference>
<dbReference type="GO" id="GO:1901525">
    <property type="term" value="P:negative regulation of mitophagy"/>
    <property type="evidence" value="ECO:0000315"/>
    <property type="project" value="MGI"/>
</dbReference>
<dbReference type="GO" id="GO:0043069">
    <property type="term" value="P:negative regulation of programmed cell death"/>
    <property type="evidence" value="ECO:0000250"/>
    <property type="project" value="UniProtKB"/>
</dbReference>
<dbReference type="GO" id="GO:2000378">
    <property type="term" value="P:negative regulation of reactive oxygen species metabolic process"/>
    <property type="evidence" value="ECO:0000315"/>
    <property type="project" value="MGI"/>
</dbReference>
<dbReference type="GO" id="GO:0010666">
    <property type="term" value="P:positive regulation of cardiac muscle cell apoptotic process"/>
    <property type="evidence" value="ECO:0000315"/>
    <property type="project" value="MGI"/>
</dbReference>
<dbReference type="GO" id="GO:0045739">
    <property type="term" value="P:positive regulation of DNA repair"/>
    <property type="evidence" value="ECO:0000250"/>
    <property type="project" value="UniProtKB"/>
</dbReference>
<dbReference type="GO" id="GO:1903301">
    <property type="term" value="P:positive regulation of hexokinase activity"/>
    <property type="evidence" value="ECO:0000250"/>
    <property type="project" value="UniProtKB"/>
</dbReference>
<dbReference type="GO" id="GO:1905857">
    <property type="term" value="P:positive regulation of pentose-phosphate shunt"/>
    <property type="evidence" value="ECO:0000314"/>
    <property type="project" value="UniProtKB"/>
</dbReference>
<dbReference type="GO" id="GO:0072593">
    <property type="term" value="P:reactive oxygen species metabolic process"/>
    <property type="evidence" value="ECO:0000315"/>
    <property type="project" value="MGI"/>
</dbReference>
<dbReference type="GO" id="GO:0043456">
    <property type="term" value="P:regulation of pentose-phosphate shunt"/>
    <property type="evidence" value="ECO:0000250"/>
    <property type="project" value="UniProtKB"/>
</dbReference>
<dbReference type="GO" id="GO:1902153">
    <property type="term" value="P:regulation of response to DNA damage checkpoint signaling"/>
    <property type="evidence" value="ECO:0000250"/>
    <property type="project" value="UniProtKB"/>
</dbReference>
<dbReference type="GO" id="GO:0010332">
    <property type="term" value="P:response to gamma radiation"/>
    <property type="evidence" value="ECO:0000315"/>
    <property type="project" value="MGI"/>
</dbReference>
<dbReference type="GO" id="GO:0002931">
    <property type="term" value="P:response to ischemia"/>
    <property type="evidence" value="ECO:0000314"/>
    <property type="project" value="UniProtKB"/>
</dbReference>
<dbReference type="GO" id="GO:0009410">
    <property type="term" value="P:response to xenobiotic stimulus"/>
    <property type="evidence" value="ECO:0000315"/>
    <property type="project" value="MGI"/>
</dbReference>
<dbReference type="CDD" id="cd07067">
    <property type="entry name" value="HP_PGM_like"/>
    <property type="match status" value="1"/>
</dbReference>
<dbReference type="FunFam" id="3.40.50.1240:FF:000026">
    <property type="entry name" value="Putative fructose-2,6-bisphosphatase TIGAR"/>
    <property type="match status" value="1"/>
</dbReference>
<dbReference type="Gene3D" id="3.40.50.1240">
    <property type="entry name" value="Phosphoglycerate mutase-like"/>
    <property type="match status" value="1"/>
</dbReference>
<dbReference type="InterPro" id="IPR013078">
    <property type="entry name" value="His_Pase_superF_clade-1"/>
</dbReference>
<dbReference type="InterPro" id="IPR029033">
    <property type="entry name" value="His_PPase_superfam"/>
</dbReference>
<dbReference type="InterPro" id="IPR001345">
    <property type="entry name" value="PG/BPGM_mutase_AS"/>
</dbReference>
<dbReference type="InterPro" id="IPR051695">
    <property type="entry name" value="Phosphoglycerate_Mutase"/>
</dbReference>
<dbReference type="PANTHER" id="PTHR46517">
    <property type="entry name" value="FRUCTOSE-2,6-BISPHOSPHATASE TIGAR"/>
    <property type="match status" value="1"/>
</dbReference>
<dbReference type="PANTHER" id="PTHR46517:SF1">
    <property type="entry name" value="FRUCTOSE-2,6-BISPHOSPHATASE TIGAR"/>
    <property type="match status" value="1"/>
</dbReference>
<dbReference type="Pfam" id="PF00300">
    <property type="entry name" value="His_Phos_1"/>
    <property type="match status" value="1"/>
</dbReference>
<dbReference type="SMART" id="SM00855">
    <property type="entry name" value="PGAM"/>
    <property type="match status" value="1"/>
</dbReference>
<dbReference type="SUPFAM" id="SSF53254">
    <property type="entry name" value="Phosphoglycerate mutase-like"/>
    <property type="match status" value="1"/>
</dbReference>
<dbReference type="PROSITE" id="PS00175">
    <property type="entry name" value="PG_MUTASE"/>
    <property type="match status" value="1"/>
</dbReference>
<feature type="chain" id="PRO_0000179958" description="Fructose-2,6-bisphosphatase TIGAR">
    <location>
        <begin position="1"/>
        <end position="269"/>
    </location>
</feature>
<feature type="active site" description="Tele-phosphohistidine intermediate" evidence="1">
    <location>
        <position position="11"/>
    </location>
</feature>
<feature type="active site" description="Proton donor/acceptor" evidence="1">
    <location>
        <position position="89"/>
    </location>
</feature>
<feature type="site" description="Transition state stabilizer" evidence="1">
    <location>
        <position position="198"/>
    </location>
</feature>
<proteinExistence type="evidence at protein level"/>
<organism>
    <name type="scientific">Mus musculus</name>
    <name type="common">Mouse</name>
    <dbReference type="NCBI Taxonomy" id="10090"/>
    <lineage>
        <taxon>Eukaryota</taxon>
        <taxon>Metazoa</taxon>
        <taxon>Chordata</taxon>
        <taxon>Craniata</taxon>
        <taxon>Vertebrata</taxon>
        <taxon>Euteleostomi</taxon>
        <taxon>Mammalia</taxon>
        <taxon>Eutheria</taxon>
        <taxon>Euarchontoglires</taxon>
        <taxon>Glires</taxon>
        <taxon>Rodentia</taxon>
        <taxon>Myomorpha</taxon>
        <taxon>Muroidea</taxon>
        <taxon>Muridae</taxon>
        <taxon>Murinae</taxon>
        <taxon>Mus</taxon>
        <taxon>Mus</taxon>
    </lineage>
</organism>
<gene>
    <name evidence="8" type="primary">Tigar</name>
</gene>
<evidence type="ECO:0000250" key="1">
    <source>
        <dbReference type="UniProtKB" id="Q7ZVE3"/>
    </source>
</evidence>
<evidence type="ECO:0000250" key="2">
    <source>
        <dbReference type="UniProtKB" id="Q9NQ88"/>
    </source>
</evidence>
<evidence type="ECO:0000269" key="3">
    <source>
    </source>
</evidence>
<evidence type="ECO:0000269" key="4">
    <source>
    </source>
</evidence>
<evidence type="ECO:0000269" key="5">
    <source>
    </source>
</evidence>
<evidence type="ECO:0000269" key="6">
    <source>
    </source>
</evidence>
<evidence type="ECO:0000305" key="7"/>
<evidence type="ECO:0000312" key="8">
    <source>
        <dbReference type="MGI" id="MGI:2442752"/>
    </source>
</evidence>
<keyword id="KW-0053">Apoptosis</keyword>
<keyword id="KW-0072">Autophagy</keyword>
<keyword id="KW-0963">Cytoplasm</keyword>
<keyword id="KW-0378">Hydrolase</keyword>
<keyword id="KW-0496">Mitochondrion</keyword>
<keyword id="KW-0539">Nucleus</keyword>
<keyword id="KW-1185">Reference proteome</keyword>
<sequence length="269" mass="29191">MPRFALTVIRHGETRLNKEKIIQGQGVDAPLSETGFRQAAAAGQFLSNVQFTHAFSSDLTRTKQTIHGILEKSRFCKDMAVKYDSRLRERMYGVAEGKPLSELRAMAKAAGEECPMFTPPGGETVEQVKMRGKDFFDFICQLILGKAGQRESVLPGAPGSGLESSLAEVFPVGKHGSLGANPKGGTLGLAASILVVSHGAYMRSLFGYFLSDLRCSLPGARDKLELSSITPNTGISVFIIDCEEARQPSIQCVCMNLQEHLNGVTEKQH</sequence>
<name>TIGAR_MOUSE</name>